<name>RLMH_CLOBM</name>
<reference key="1">
    <citation type="journal article" date="2007" name="PLoS ONE">
        <title>Analysis of the neurotoxin complex genes in Clostridium botulinum A1-A4 and B1 strains: BoNT/A3, /Ba4 and /B1 clusters are located within plasmids.</title>
        <authorList>
            <person name="Smith T.J."/>
            <person name="Hill K.K."/>
            <person name="Foley B.T."/>
            <person name="Detter J.C."/>
            <person name="Munk A.C."/>
            <person name="Bruce D.C."/>
            <person name="Doggett N.A."/>
            <person name="Smith L.A."/>
            <person name="Marks J.D."/>
            <person name="Xie G."/>
            <person name="Brettin T.S."/>
        </authorList>
    </citation>
    <scope>NUCLEOTIDE SEQUENCE [LARGE SCALE GENOMIC DNA]</scope>
    <source>
        <strain>Loch Maree / Type A3</strain>
    </source>
</reference>
<organism>
    <name type="scientific">Clostridium botulinum (strain Loch Maree / Type A3)</name>
    <dbReference type="NCBI Taxonomy" id="498214"/>
    <lineage>
        <taxon>Bacteria</taxon>
        <taxon>Bacillati</taxon>
        <taxon>Bacillota</taxon>
        <taxon>Clostridia</taxon>
        <taxon>Eubacteriales</taxon>
        <taxon>Clostridiaceae</taxon>
        <taxon>Clostridium</taxon>
    </lineage>
</organism>
<feature type="chain" id="PRO_0000366581" description="Ribosomal RNA large subunit methyltransferase H">
    <location>
        <begin position="1"/>
        <end position="159"/>
    </location>
</feature>
<feature type="binding site" evidence="1">
    <location>
        <position position="76"/>
    </location>
    <ligand>
        <name>S-adenosyl-L-methionine</name>
        <dbReference type="ChEBI" id="CHEBI:59789"/>
    </ligand>
</feature>
<feature type="binding site" evidence="1">
    <location>
        <position position="108"/>
    </location>
    <ligand>
        <name>S-adenosyl-L-methionine</name>
        <dbReference type="ChEBI" id="CHEBI:59789"/>
    </ligand>
</feature>
<feature type="binding site" evidence="1">
    <location>
        <begin position="127"/>
        <end position="132"/>
    </location>
    <ligand>
        <name>S-adenosyl-L-methionine</name>
        <dbReference type="ChEBI" id="CHEBI:59789"/>
    </ligand>
</feature>
<sequence>MNISIISVGKIKEKFLRAAIDEYSKRLSKYCKLNIIEVTDEKTPDNASLKEENIIREKEGSLILKHIKDNNFVIAIDLKGKSIASEEFSDLIENCRLTGNSTIAFVIGGSLGLSQQVLSRANYKLSFSKMTFPHQLFRVMLLEQVYRAFRILCGEPYHK</sequence>
<proteinExistence type="inferred from homology"/>
<comment type="function">
    <text evidence="1">Specifically methylates the pseudouridine at position 1915 (m3Psi1915) in 23S rRNA.</text>
</comment>
<comment type="catalytic activity">
    <reaction evidence="1">
        <text>pseudouridine(1915) in 23S rRNA + S-adenosyl-L-methionine = N(3)-methylpseudouridine(1915) in 23S rRNA + S-adenosyl-L-homocysteine + H(+)</text>
        <dbReference type="Rhea" id="RHEA:42752"/>
        <dbReference type="Rhea" id="RHEA-COMP:10221"/>
        <dbReference type="Rhea" id="RHEA-COMP:10222"/>
        <dbReference type="ChEBI" id="CHEBI:15378"/>
        <dbReference type="ChEBI" id="CHEBI:57856"/>
        <dbReference type="ChEBI" id="CHEBI:59789"/>
        <dbReference type="ChEBI" id="CHEBI:65314"/>
        <dbReference type="ChEBI" id="CHEBI:74486"/>
        <dbReference type="EC" id="2.1.1.177"/>
    </reaction>
</comment>
<comment type="subunit">
    <text evidence="1">Homodimer.</text>
</comment>
<comment type="subcellular location">
    <subcellularLocation>
        <location evidence="1">Cytoplasm</location>
    </subcellularLocation>
</comment>
<comment type="similarity">
    <text evidence="1">Belongs to the RNA methyltransferase RlmH family.</text>
</comment>
<gene>
    <name evidence="1" type="primary">rlmH</name>
    <name type="ordered locus">CLK_3039</name>
</gene>
<keyword id="KW-0963">Cytoplasm</keyword>
<keyword id="KW-0489">Methyltransferase</keyword>
<keyword id="KW-0698">rRNA processing</keyword>
<keyword id="KW-0949">S-adenosyl-L-methionine</keyword>
<keyword id="KW-0808">Transferase</keyword>
<accession>B1KTH1</accession>
<protein>
    <recommendedName>
        <fullName evidence="1">Ribosomal RNA large subunit methyltransferase H</fullName>
        <ecNumber evidence="1">2.1.1.177</ecNumber>
    </recommendedName>
    <alternativeName>
        <fullName evidence="1">23S rRNA (pseudouridine1915-N3)-methyltransferase</fullName>
    </alternativeName>
    <alternativeName>
        <fullName evidence="1">23S rRNA m3Psi1915 methyltransferase</fullName>
    </alternativeName>
    <alternativeName>
        <fullName evidence="1">rRNA (pseudouridine-N3-)-methyltransferase RlmH</fullName>
    </alternativeName>
</protein>
<dbReference type="EC" id="2.1.1.177" evidence="1"/>
<dbReference type="EMBL" id="CP000962">
    <property type="protein sequence ID" value="ACA56717.1"/>
    <property type="molecule type" value="Genomic_DNA"/>
</dbReference>
<dbReference type="RefSeq" id="WP_012344551.1">
    <property type="nucleotide sequence ID" value="NC_010520.1"/>
</dbReference>
<dbReference type="SMR" id="B1KTH1"/>
<dbReference type="KEGG" id="cbl:CLK_3039"/>
<dbReference type="HOGENOM" id="CLU_100552_0_0_9"/>
<dbReference type="GO" id="GO:0005737">
    <property type="term" value="C:cytoplasm"/>
    <property type="evidence" value="ECO:0007669"/>
    <property type="project" value="UniProtKB-SubCell"/>
</dbReference>
<dbReference type="GO" id="GO:0070038">
    <property type="term" value="F:rRNA (pseudouridine-N3-)-methyltransferase activity"/>
    <property type="evidence" value="ECO:0007669"/>
    <property type="project" value="UniProtKB-UniRule"/>
</dbReference>
<dbReference type="CDD" id="cd18081">
    <property type="entry name" value="RlmH-like"/>
    <property type="match status" value="1"/>
</dbReference>
<dbReference type="Gene3D" id="3.40.1280.10">
    <property type="match status" value="1"/>
</dbReference>
<dbReference type="HAMAP" id="MF_00658">
    <property type="entry name" value="23SrRNA_methyltr_H"/>
    <property type="match status" value="1"/>
</dbReference>
<dbReference type="InterPro" id="IPR029028">
    <property type="entry name" value="Alpha/beta_knot_MTases"/>
</dbReference>
<dbReference type="InterPro" id="IPR003742">
    <property type="entry name" value="RlmH-like"/>
</dbReference>
<dbReference type="InterPro" id="IPR029026">
    <property type="entry name" value="tRNA_m1G_MTases_N"/>
</dbReference>
<dbReference type="NCBIfam" id="NF000985">
    <property type="entry name" value="PRK00103.1-3"/>
    <property type="match status" value="1"/>
</dbReference>
<dbReference type="NCBIfam" id="TIGR00246">
    <property type="entry name" value="tRNA_RlmH_YbeA"/>
    <property type="match status" value="1"/>
</dbReference>
<dbReference type="PANTHER" id="PTHR33603">
    <property type="entry name" value="METHYLTRANSFERASE"/>
    <property type="match status" value="1"/>
</dbReference>
<dbReference type="PANTHER" id="PTHR33603:SF1">
    <property type="entry name" value="RIBOSOMAL RNA LARGE SUBUNIT METHYLTRANSFERASE H"/>
    <property type="match status" value="1"/>
</dbReference>
<dbReference type="Pfam" id="PF02590">
    <property type="entry name" value="SPOUT_MTase"/>
    <property type="match status" value="1"/>
</dbReference>
<dbReference type="PIRSF" id="PIRSF004505">
    <property type="entry name" value="MT_bac"/>
    <property type="match status" value="1"/>
</dbReference>
<dbReference type="SUPFAM" id="SSF75217">
    <property type="entry name" value="alpha/beta knot"/>
    <property type="match status" value="1"/>
</dbReference>
<evidence type="ECO:0000255" key="1">
    <source>
        <dbReference type="HAMAP-Rule" id="MF_00658"/>
    </source>
</evidence>